<feature type="chain" id="PRO_0000160411" description="ATP-dependent Clp protease ATP-binding subunit ClpX">
    <location>
        <begin position="1"/>
        <end position="424"/>
    </location>
</feature>
<feature type="domain" description="ClpX-type ZB" evidence="2">
    <location>
        <begin position="3"/>
        <end position="56"/>
    </location>
</feature>
<feature type="binding site" evidence="2">
    <location>
        <position position="15"/>
    </location>
    <ligand>
        <name>Zn(2+)</name>
        <dbReference type="ChEBI" id="CHEBI:29105"/>
    </ligand>
</feature>
<feature type="binding site" evidence="2">
    <location>
        <position position="18"/>
    </location>
    <ligand>
        <name>Zn(2+)</name>
        <dbReference type="ChEBI" id="CHEBI:29105"/>
    </ligand>
</feature>
<feature type="binding site" evidence="2">
    <location>
        <position position="37"/>
    </location>
    <ligand>
        <name>Zn(2+)</name>
        <dbReference type="ChEBI" id="CHEBI:29105"/>
    </ligand>
</feature>
<feature type="binding site" evidence="2">
    <location>
        <position position="40"/>
    </location>
    <ligand>
        <name>Zn(2+)</name>
        <dbReference type="ChEBI" id="CHEBI:29105"/>
    </ligand>
</feature>
<feature type="binding site" evidence="1">
    <location>
        <begin position="119"/>
        <end position="126"/>
    </location>
    <ligand>
        <name>ATP</name>
        <dbReference type="ChEBI" id="CHEBI:30616"/>
    </ligand>
</feature>
<gene>
    <name evidence="1" type="primary">clpX</name>
    <name type="ordered locus">RPA2960</name>
</gene>
<keyword id="KW-0067">ATP-binding</keyword>
<keyword id="KW-0143">Chaperone</keyword>
<keyword id="KW-0479">Metal-binding</keyword>
<keyword id="KW-0547">Nucleotide-binding</keyword>
<keyword id="KW-0862">Zinc</keyword>
<name>CLPX_RHOPA</name>
<evidence type="ECO:0000255" key="1">
    <source>
        <dbReference type="HAMAP-Rule" id="MF_00175"/>
    </source>
</evidence>
<evidence type="ECO:0000255" key="2">
    <source>
        <dbReference type="PROSITE-ProRule" id="PRU01250"/>
    </source>
</evidence>
<proteinExistence type="inferred from homology"/>
<sequence length="424" mass="46680">MSKVGTSDSKNTLYCSFCGKSQHEVRKLIAGPTVFICDECVELCMDIIREENKSSLVKSRDGIPTPKEICKVLDDYVIGQNHAKKVLSVAVHNHYKRLNHQTKHNDVELAKSNILLIGPTGSGKTLLAQTLARILDVPFTMADATTLTEAGYVGEDVENIILKLLQAADYNVERAQRGIVYIDEIDKISRKSDNPSITRDVSGEGVQQALLKIMEGTVASVPPQGGRKHPQQEFLQVDTTNILFICGGAFAGLEKIISSRGRTTSIGFAAQVLAPEDRRTGEIFRHVEPEDLLKYGLIPEFVGRLPVVATLEDLDENSLKKILTDPKNALVKQYQRLFEMENVELTFADEALGAVARKAIERKTGARGLRSILESILLETMFDLPGLEGVEEVVISREVVDGTARPLYIYADRTDRAAETSASA</sequence>
<organism>
    <name type="scientific">Rhodopseudomonas palustris (strain ATCC BAA-98 / CGA009)</name>
    <dbReference type="NCBI Taxonomy" id="258594"/>
    <lineage>
        <taxon>Bacteria</taxon>
        <taxon>Pseudomonadati</taxon>
        <taxon>Pseudomonadota</taxon>
        <taxon>Alphaproteobacteria</taxon>
        <taxon>Hyphomicrobiales</taxon>
        <taxon>Nitrobacteraceae</taxon>
        <taxon>Rhodopseudomonas</taxon>
    </lineage>
</organism>
<dbReference type="EMBL" id="BX572602">
    <property type="protein sequence ID" value="CAE28401.1"/>
    <property type="molecule type" value="Genomic_DNA"/>
</dbReference>
<dbReference type="RefSeq" id="WP_011158509.1">
    <property type="nucleotide sequence ID" value="NZ_CP116810.1"/>
</dbReference>
<dbReference type="SMR" id="Q6N5L4"/>
<dbReference type="STRING" id="258594.RPA2960"/>
<dbReference type="GeneID" id="66894046"/>
<dbReference type="eggNOG" id="COG1219">
    <property type="taxonomic scope" value="Bacteria"/>
</dbReference>
<dbReference type="HOGENOM" id="CLU_014218_8_2_5"/>
<dbReference type="PhylomeDB" id="Q6N5L4"/>
<dbReference type="GO" id="GO:0009376">
    <property type="term" value="C:HslUV protease complex"/>
    <property type="evidence" value="ECO:0007669"/>
    <property type="project" value="TreeGrafter"/>
</dbReference>
<dbReference type="GO" id="GO:0005524">
    <property type="term" value="F:ATP binding"/>
    <property type="evidence" value="ECO:0007669"/>
    <property type="project" value="UniProtKB-UniRule"/>
</dbReference>
<dbReference type="GO" id="GO:0016887">
    <property type="term" value="F:ATP hydrolysis activity"/>
    <property type="evidence" value="ECO:0007669"/>
    <property type="project" value="InterPro"/>
</dbReference>
<dbReference type="GO" id="GO:0140662">
    <property type="term" value="F:ATP-dependent protein folding chaperone"/>
    <property type="evidence" value="ECO:0007669"/>
    <property type="project" value="InterPro"/>
</dbReference>
<dbReference type="GO" id="GO:0046983">
    <property type="term" value="F:protein dimerization activity"/>
    <property type="evidence" value="ECO:0007669"/>
    <property type="project" value="InterPro"/>
</dbReference>
<dbReference type="GO" id="GO:0051082">
    <property type="term" value="F:unfolded protein binding"/>
    <property type="evidence" value="ECO:0007669"/>
    <property type="project" value="UniProtKB-UniRule"/>
</dbReference>
<dbReference type="GO" id="GO:0008270">
    <property type="term" value="F:zinc ion binding"/>
    <property type="evidence" value="ECO:0007669"/>
    <property type="project" value="InterPro"/>
</dbReference>
<dbReference type="GO" id="GO:0051301">
    <property type="term" value="P:cell division"/>
    <property type="evidence" value="ECO:0007669"/>
    <property type="project" value="TreeGrafter"/>
</dbReference>
<dbReference type="GO" id="GO:0051603">
    <property type="term" value="P:proteolysis involved in protein catabolic process"/>
    <property type="evidence" value="ECO:0007669"/>
    <property type="project" value="TreeGrafter"/>
</dbReference>
<dbReference type="CDD" id="cd19497">
    <property type="entry name" value="RecA-like_ClpX"/>
    <property type="match status" value="1"/>
</dbReference>
<dbReference type="FunFam" id="1.10.8.60:FF:000002">
    <property type="entry name" value="ATP-dependent Clp protease ATP-binding subunit ClpX"/>
    <property type="match status" value="1"/>
</dbReference>
<dbReference type="FunFam" id="3.40.50.300:FF:000005">
    <property type="entry name" value="ATP-dependent Clp protease ATP-binding subunit ClpX"/>
    <property type="match status" value="1"/>
</dbReference>
<dbReference type="Gene3D" id="1.10.8.60">
    <property type="match status" value="1"/>
</dbReference>
<dbReference type="Gene3D" id="6.20.220.10">
    <property type="entry name" value="ClpX chaperone, C4-type zinc finger domain"/>
    <property type="match status" value="1"/>
</dbReference>
<dbReference type="Gene3D" id="3.40.50.300">
    <property type="entry name" value="P-loop containing nucleotide triphosphate hydrolases"/>
    <property type="match status" value="1"/>
</dbReference>
<dbReference type="HAMAP" id="MF_00175">
    <property type="entry name" value="ClpX"/>
    <property type="match status" value="1"/>
</dbReference>
<dbReference type="InterPro" id="IPR003593">
    <property type="entry name" value="AAA+_ATPase"/>
</dbReference>
<dbReference type="InterPro" id="IPR050052">
    <property type="entry name" value="ATP-dep_Clp_protease_ClpX"/>
</dbReference>
<dbReference type="InterPro" id="IPR003959">
    <property type="entry name" value="ATPase_AAA_core"/>
</dbReference>
<dbReference type="InterPro" id="IPR019489">
    <property type="entry name" value="Clp_ATPase_C"/>
</dbReference>
<dbReference type="InterPro" id="IPR004487">
    <property type="entry name" value="Clp_protease_ATP-bd_su_ClpX"/>
</dbReference>
<dbReference type="InterPro" id="IPR046425">
    <property type="entry name" value="ClpX_bact"/>
</dbReference>
<dbReference type="InterPro" id="IPR027417">
    <property type="entry name" value="P-loop_NTPase"/>
</dbReference>
<dbReference type="InterPro" id="IPR010603">
    <property type="entry name" value="Znf_CppX_C4"/>
</dbReference>
<dbReference type="InterPro" id="IPR038366">
    <property type="entry name" value="Znf_CppX_C4_sf"/>
</dbReference>
<dbReference type="NCBIfam" id="TIGR00382">
    <property type="entry name" value="clpX"/>
    <property type="match status" value="1"/>
</dbReference>
<dbReference type="NCBIfam" id="NF003745">
    <property type="entry name" value="PRK05342.1"/>
    <property type="match status" value="1"/>
</dbReference>
<dbReference type="PANTHER" id="PTHR48102:SF7">
    <property type="entry name" value="ATP-DEPENDENT CLP PROTEASE ATP-BINDING SUBUNIT CLPX-LIKE, MITOCHONDRIAL"/>
    <property type="match status" value="1"/>
</dbReference>
<dbReference type="PANTHER" id="PTHR48102">
    <property type="entry name" value="ATP-DEPENDENT CLP PROTEASE ATP-BINDING SUBUNIT CLPX-LIKE, MITOCHONDRIAL-RELATED"/>
    <property type="match status" value="1"/>
</dbReference>
<dbReference type="Pfam" id="PF07724">
    <property type="entry name" value="AAA_2"/>
    <property type="match status" value="1"/>
</dbReference>
<dbReference type="Pfam" id="PF10431">
    <property type="entry name" value="ClpB_D2-small"/>
    <property type="match status" value="1"/>
</dbReference>
<dbReference type="Pfam" id="PF06689">
    <property type="entry name" value="zf-C4_ClpX"/>
    <property type="match status" value="1"/>
</dbReference>
<dbReference type="SMART" id="SM00382">
    <property type="entry name" value="AAA"/>
    <property type="match status" value="1"/>
</dbReference>
<dbReference type="SMART" id="SM01086">
    <property type="entry name" value="ClpB_D2-small"/>
    <property type="match status" value="1"/>
</dbReference>
<dbReference type="SMART" id="SM00994">
    <property type="entry name" value="zf-C4_ClpX"/>
    <property type="match status" value="1"/>
</dbReference>
<dbReference type="SUPFAM" id="SSF57716">
    <property type="entry name" value="Glucocorticoid receptor-like (DNA-binding domain)"/>
    <property type="match status" value="1"/>
</dbReference>
<dbReference type="SUPFAM" id="SSF52540">
    <property type="entry name" value="P-loop containing nucleoside triphosphate hydrolases"/>
    <property type="match status" value="1"/>
</dbReference>
<dbReference type="PROSITE" id="PS51902">
    <property type="entry name" value="CLPX_ZB"/>
    <property type="match status" value="1"/>
</dbReference>
<accession>Q6N5L4</accession>
<comment type="function">
    <text evidence="1">ATP-dependent specificity component of the Clp protease. It directs the protease to specific substrates. Can perform chaperone functions in the absence of ClpP.</text>
</comment>
<comment type="subunit">
    <text evidence="1">Component of the ClpX-ClpP complex. Forms a hexameric ring that, in the presence of ATP, binds to fourteen ClpP subunits assembled into a disk-like structure with a central cavity, resembling the structure of eukaryotic proteasomes.</text>
</comment>
<comment type="similarity">
    <text evidence="1">Belongs to the ClpX chaperone family.</text>
</comment>
<protein>
    <recommendedName>
        <fullName evidence="1">ATP-dependent Clp protease ATP-binding subunit ClpX</fullName>
    </recommendedName>
</protein>
<reference key="1">
    <citation type="journal article" date="2004" name="Nat. Biotechnol.">
        <title>Complete genome sequence of the metabolically versatile photosynthetic bacterium Rhodopseudomonas palustris.</title>
        <authorList>
            <person name="Larimer F.W."/>
            <person name="Chain P."/>
            <person name="Hauser L."/>
            <person name="Lamerdin J.E."/>
            <person name="Malfatti S."/>
            <person name="Do L."/>
            <person name="Land M.L."/>
            <person name="Pelletier D.A."/>
            <person name="Beatty J.T."/>
            <person name="Lang A.S."/>
            <person name="Tabita F.R."/>
            <person name="Gibson J.L."/>
            <person name="Hanson T.E."/>
            <person name="Bobst C."/>
            <person name="Torres y Torres J.L."/>
            <person name="Peres C."/>
            <person name="Harrison F.H."/>
            <person name="Gibson J."/>
            <person name="Harwood C.S."/>
        </authorList>
    </citation>
    <scope>NUCLEOTIDE SEQUENCE [LARGE SCALE GENOMIC DNA]</scope>
    <source>
        <strain>ATCC BAA-98 / CGA009</strain>
    </source>
</reference>